<organism>
    <name type="scientific">Pipile pipile</name>
    <name type="common">Trinidad piping guan</name>
    <name type="synonym">Aburria pipile</name>
    <dbReference type="NCBI Taxonomy" id="211679"/>
    <lineage>
        <taxon>Eukaryota</taxon>
        <taxon>Metazoa</taxon>
        <taxon>Chordata</taxon>
        <taxon>Craniata</taxon>
        <taxon>Vertebrata</taxon>
        <taxon>Euteleostomi</taxon>
        <taxon>Archelosauria</taxon>
        <taxon>Archosauria</taxon>
        <taxon>Dinosauria</taxon>
        <taxon>Saurischia</taxon>
        <taxon>Theropoda</taxon>
        <taxon>Coelurosauria</taxon>
        <taxon>Aves</taxon>
        <taxon>Neognathae</taxon>
        <taxon>Galloanserae</taxon>
        <taxon>Galliformes</taxon>
        <taxon>Cracidae</taxon>
        <taxon>Pipile</taxon>
    </lineage>
</organism>
<dbReference type="PIR" id="D31444">
    <property type="entry name" value="D31444"/>
</dbReference>
<dbReference type="SMR" id="P05584"/>
<dbReference type="GO" id="GO:0005576">
    <property type="term" value="C:extracellular region"/>
    <property type="evidence" value="ECO:0007669"/>
    <property type="project" value="UniProtKB-SubCell"/>
</dbReference>
<dbReference type="GO" id="GO:0004867">
    <property type="term" value="F:serine-type endopeptidase inhibitor activity"/>
    <property type="evidence" value="ECO:0007669"/>
    <property type="project" value="UniProtKB-KW"/>
</dbReference>
<dbReference type="CDD" id="cd00104">
    <property type="entry name" value="KAZAL_FS"/>
    <property type="match status" value="1"/>
</dbReference>
<dbReference type="FunFam" id="3.30.60.30:FF:000037">
    <property type="entry name" value="Ovomucoid"/>
    <property type="match status" value="1"/>
</dbReference>
<dbReference type="Gene3D" id="3.30.60.30">
    <property type="match status" value="1"/>
</dbReference>
<dbReference type="InterPro" id="IPR051597">
    <property type="entry name" value="Bifunctional_prot_inhibitor"/>
</dbReference>
<dbReference type="InterPro" id="IPR002350">
    <property type="entry name" value="Kazal_dom"/>
</dbReference>
<dbReference type="InterPro" id="IPR036058">
    <property type="entry name" value="Kazal_dom_sf"/>
</dbReference>
<dbReference type="PANTHER" id="PTHR47729:SF1">
    <property type="entry name" value="OVOMUCOID-LIKE-RELATED"/>
    <property type="match status" value="1"/>
</dbReference>
<dbReference type="PANTHER" id="PTHR47729">
    <property type="entry name" value="SERINE PEPTIDASE INHIBITOR, KAZAL TYPE 2, TANDEM DUPLICATE 1-RELATED"/>
    <property type="match status" value="1"/>
</dbReference>
<dbReference type="Pfam" id="PF00050">
    <property type="entry name" value="Kazal_1"/>
    <property type="match status" value="1"/>
</dbReference>
<dbReference type="SMART" id="SM00280">
    <property type="entry name" value="KAZAL"/>
    <property type="match status" value="1"/>
</dbReference>
<dbReference type="SUPFAM" id="SSF100895">
    <property type="entry name" value="Kazal-type serine protease inhibitors"/>
    <property type="match status" value="1"/>
</dbReference>
<dbReference type="PROSITE" id="PS00282">
    <property type="entry name" value="KAZAL_1"/>
    <property type="match status" value="1"/>
</dbReference>
<dbReference type="PROSITE" id="PS51465">
    <property type="entry name" value="KAZAL_2"/>
    <property type="match status" value="1"/>
</dbReference>
<comment type="subcellular location">
    <subcellularLocation>
        <location>Secreted</location>
    </subcellularLocation>
</comment>
<comment type="domain">
    <text>Avian ovomucoid consists of three homologous, tandem Kazal family inhibitory domains.</text>
</comment>
<keyword id="KW-0903">Direct protein sequencing</keyword>
<keyword id="KW-1015">Disulfide bond</keyword>
<keyword id="KW-0325">Glycoprotein</keyword>
<keyword id="KW-0646">Protease inhibitor</keyword>
<keyword id="KW-0677">Repeat</keyword>
<keyword id="KW-0964">Secreted</keyword>
<keyword id="KW-0722">Serine protease inhibitor</keyword>
<accession>P05584</accession>
<reference key="1">
    <citation type="journal article" date="1987" name="Biochemistry">
        <title>Ovomucoid third domains from 100 avian species: isolation, sequences, and hypervariability of enzyme-inhibitor contact residues.</title>
        <authorList>
            <person name="Laskowski M. Jr."/>
            <person name="Kato I."/>
            <person name="Ardelt W."/>
            <person name="Cook J."/>
            <person name="Denton A."/>
            <person name="Empie M.W."/>
            <person name="Kohr W.J."/>
            <person name="Park S.J."/>
            <person name="Parks K."/>
            <person name="Schatzley B.L."/>
            <person name="Schoenberger O.L."/>
            <person name="Tashiro M."/>
            <person name="Vichot G."/>
            <person name="Whatley H.E."/>
            <person name="Wieczorek A."/>
            <person name="Wieczorek M."/>
        </authorList>
    </citation>
    <scope>PROTEIN SEQUENCE</scope>
</reference>
<protein>
    <recommendedName>
        <fullName>Ovomucoid</fullName>
    </recommendedName>
</protein>
<evidence type="ECO:0000255" key="1">
    <source>
        <dbReference type="PROSITE-ProRule" id="PRU00798"/>
    </source>
</evidence>
<sequence length="56" mass="6015">LAPVNVDCSDHPKPACLQEQKPLCGSDNKTYDNKCSFCNAVVDSNGTLTLSHFGKC</sequence>
<proteinExistence type="evidence at protein level"/>
<feature type="chain" id="PRO_0000073045" description="Ovomucoid">
    <location>
        <begin position="1" status="less than"/>
        <end position="56" status="greater than"/>
    </location>
</feature>
<feature type="domain" description="Kazal-like" evidence="1">
    <location>
        <begin position="6"/>
        <end position="56"/>
    </location>
</feature>
<feature type="site" description="Reactive bond 3">
    <location>
        <begin position="18"/>
        <end position="19"/>
    </location>
</feature>
<feature type="glycosylation site" description="N-linked (GlcNAc...) asparagine">
    <location>
        <position position="45"/>
    </location>
</feature>
<feature type="disulfide bond">
    <location>
        <begin position="8"/>
        <end position="38"/>
    </location>
</feature>
<feature type="disulfide bond">
    <location>
        <begin position="16"/>
        <end position="35"/>
    </location>
</feature>
<feature type="disulfide bond">
    <location>
        <begin position="24"/>
        <end position="56"/>
    </location>
</feature>
<feature type="non-terminal residue">
    <location>
        <position position="1"/>
    </location>
</feature>
<feature type="non-terminal residue">
    <location>
        <position position="56"/>
    </location>
</feature>
<name>IOVO_PIPPP</name>